<sequence length="56" mass="6229">MPMPVLIFLIGYLPFFLAAYWIYDMESVRKQAITAGAILSFDAAMLAIFGGILGWI</sequence>
<name>Y1327_ARCFU</name>
<keyword id="KW-1003">Cell membrane</keyword>
<keyword id="KW-0472">Membrane</keyword>
<keyword id="KW-1185">Reference proteome</keyword>
<keyword id="KW-0812">Transmembrane</keyword>
<keyword id="KW-1133">Transmembrane helix</keyword>
<dbReference type="EMBL" id="AE000782">
    <property type="protein sequence ID" value="AAB89929.1"/>
    <property type="molecule type" value="Genomic_DNA"/>
</dbReference>
<dbReference type="PIR" id="F69415">
    <property type="entry name" value="F69415"/>
</dbReference>
<dbReference type="STRING" id="224325.AF_1327"/>
<dbReference type="PaxDb" id="224325-AF_1327"/>
<dbReference type="EnsemblBacteria" id="AAB89929">
    <property type="protein sequence ID" value="AAB89929"/>
    <property type="gene ID" value="AF_1327"/>
</dbReference>
<dbReference type="KEGG" id="afu:AF_1327"/>
<dbReference type="HOGENOM" id="CLU_3002938_0_0_2"/>
<dbReference type="Proteomes" id="UP000002199">
    <property type="component" value="Chromosome"/>
</dbReference>
<dbReference type="GO" id="GO:0005886">
    <property type="term" value="C:plasma membrane"/>
    <property type="evidence" value="ECO:0007669"/>
    <property type="project" value="UniProtKB-SubCell"/>
</dbReference>
<accession>O28942</accession>
<reference key="1">
    <citation type="journal article" date="1997" name="Nature">
        <title>The complete genome sequence of the hyperthermophilic, sulphate-reducing archaeon Archaeoglobus fulgidus.</title>
        <authorList>
            <person name="Klenk H.-P."/>
            <person name="Clayton R.A."/>
            <person name="Tomb J.-F."/>
            <person name="White O."/>
            <person name="Nelson K.E."/>
            <person name="Ketchum K.A."/>
            <person name="Dodson R.J."/>
            <person name="Gwinn M.L."/>
            <person name="Hickey E.K."/>
            <person name="Peterson J.D."/>
            <person name="Richardson D.L."/>
            <person name="Kerlavage A.R."/>
            <person name="Graham D.E."/>
            <person name="Kyrpides N.C."/>
            <person name="Fleischmann R.D."/>
            <person name="Quackenbush J."/>
            <person name="Lee N.H."/>
            <person name="Sutton G.G."/>
            <person name="Gill S.R."/>
            <person name="Kirkness E.F."/>
            <person name="Dougherty B.A."/>
            <person name="McKenney K."/>
            <person name="Adams M.D."/>
            <person name="Loftus B.J."/>
            <person name="Peterson S.N."/>
            <person name="Reich C.I."/>
            <person name="McNeil L.K."/>
            <person name="Badger J.H."/>
            <person name="Glodek A."/>
            <person name="Zhou L."/>
            <person name="Overbeek R."/>
            <person name="Gocayne J.D."/>
            <person name="Weidman J.F."/>
            <person name="McDonald L.A."/>
            <person name="Utterback T.R."/>
            <person name="Cotton M.D."/>
            <person name="Spriggs T."/>
            <person name="Artiach P."/>
            <person name="Kaine B.P."/>
            <person name="Sykes S.M."/>
            <person name="Sadow P.W."/>
            <person name="D'Andrea K.P."/>
            <person name="Bowman C."/>
            <person name="Fujii C."/>
            <person name="Garland S.A."/>
            <person name="Mason T.M."/>
            <person name="Olsen G.J."/>
            <person name="Fraser C.M."/>
            <person name="Smith H.O."/>
            <person name="Woese C.R."/>
            <person name="Venter J.C."/>
        </authorList>
    </citation>
    <scope>NUCLEOTIDE SEQUENCE [LARGE SCALE GENOMIC DNA]</scope>
    <source>
        <strain>ATCC 49558 / DSM 4304 / JCM 9628 / NBRC 100126 / VC-16</strain>
    </source>
</reference>
<organism>
    <name type="scientific">Archaeoglobus fulgidus (strain ATCC 49558 / DSM 4304 / JCM 9628 / NBRC 100126 / VC-16)</name>
    <dbReference type="NCBI Taxonomy" id="224325"/>
    <lineage>
        <taxon>Archaea</taxon>
        <taxon>Methanobacteriati</taxon>
        <taxon>Methanobacteriota</taxon>
        <taxon>Archaeoglobi</taxon>
        <taxon>Archaeoglobales</taxon>
        <taxon>Archaeoglobaceae</taxon>
        <taxon>Archaeoglobus</taxon>
    </lineage>
</organism>
<feature type="chain" id="PRO_0000127988" description="Uncharacterized protein AF_1327">
    <location>
        <begin position="1"/>
        <end position="56"/>
    </location>
</feature>
<feature type="transmembrane region" description="Helical" evidence="1">
    <location>
        <begin position="5"/>
        <end position="23"/>
    </location>
</feature>
<feature type="transmembrane region" description="Helical" evidence="1">
    <location>
        <begin position="33"/>
        <end position="55"/>
    </location>
</feature>
<protein>
    <recommendedName>
        <fullName>Uncharacterized protein AF_1327</fullName>
    </recommendedName>
</protein>
<proteinExistence type="predicted"/>
<evidence type="ECO:0000255" key="1"/>
<evidence type="ECO:0000305" key="2"/>
<gene>
    <name type="ordered locus">AF_1327</name>
</gene>
<comment type="subcellular location">
    <subcellularLocation>
        <location evidence="2">Cell membrane</location>
        <topology evidence="2">Multi-pass membrane protein</topology>
    </subcellularLocation>
</comment>